<evidence type="ECO:0000255" key="1">
    <source>
        <dbReference type="HAMAP-Rule" id="MF_02008"/>
    </source>
</evidence>
<accession>Q46BQ5</accession>
<reference key="1">
    <citation type="journal article" date="2006" name="J. Bacteriol.">
        <title>The Methanosarcina barkeri genome: comparative analysis with Methanosarcina acetivorans and Methanosarcina mazei reveals extensive rearrangement within methanosarcinal genomes.</title>
        <authorList>
            <person name="Maeder D.L."/>
            <person name="Anderson I."/>
            <person name="Brettin T.S."/>
            <person name="Bruce D.C."/>
            <person name="Gilna P."/>
            <person name="Han C.S."/>
            <person name="Lapidus A."/>
            <person name="Metcalf W.W."/>
            <person name="Saunders E."/>
            <person name="Tapia R."/>
            <person name="Sowers K.R."/>
        </authorList>
    </citation>
    <scope>NUCLEOTIDE SEQUENCE [LARGE SCALE GENOMIC DNA]</scope>
    <source>
        <strain>Fusaro / DSM 804</strain>
    </source>
</reference>
<sequence length="317" mass="36110">MDRLDLIKRNVQEIVTEGELEELLNKKKAPRAYVGYEPSGKIHMGHVLTVNKLIDLQKAGFEITVLLADVHAYLNRKGTLEEVRKIADYNKRCFIALGLDKEKTNFVYGSDYQLGAEYMLNVLKLSRSVTLNRARRSMDEVGRAMDDPTVSQMVYPLMQAIDIAMLGVDIAVGGIDQRKIHMLARENLKNLGFETPICIHTPILLGLDGTKMASSKENFISVDDTEEEIYRKLKKAYCKIGDTEENPILALFRYHIFPRYETIVIERPEKFGGNITYTSYEEMENAFVAESVHPMDLKNSAAKYINEILDPVRKVLL</sequence>
<protein>
    <recommendedName>
        <fullName evidence="1">Tyrosine--tRNA ligase</fullName>
        <ecNumber evidence="1">6.1.1.1</ecNumber>
    </recommendedName>
    <alternativeName>
        <fullName evidence="1">Tyrosyl-tRNA synthetase</fullName>
        <shortName evidence="1">TyrRS</shortName>
    </alternativeName>
</protein>
<proteinExistence type="inferred from homology"/>
<gene>
    <name evidence="1" type="primary">tyrS</name>
    <name type="ordered locus">Mbar_A1745</name>
</gene>
<dbReference type="EC" id="6.1.1.1" evidence="1"/>
<dbReference type="EMBL" id="CP000099">
    <property type="protein sequence ID" value="AAZ70687.1"/>
    <property type="molecule type" value="Genomic_DNA"/>
</dbReference>
<dbReference type="SMR" id="Q46BQ5"/>
<dbReference type="STRING" id="269797.Mbar_A1745"/>
<dbReference type="PaxDb" id="269797-Mbar_A1745"/>
<dbReference type="KEGG" id="mba:Mbar_A1745"/>
<dbReference type="eggNOG" id="arCOG01886">
    <property type="taxonomic scope" value="Archaea"/>
</dbReference>
<dbReference type="HOGENOM" id="CLU_035267_0_1_2"/>
<dbReference type="OrthoDB" id="8389at2157"/>
<dbReference type="GO" id="GO:0005737">
    <property type="term" value="C:cytoplasm"/>
    <property type="evidence" value="ECO:0007669"/>
    <property type="project" value="UniProtKB-SubCell"/>
</dbReference>
<dbReference type="GO" id="GO:0005524">
    <property type="term" value="F:ATP binding"/>
    <property type="evidence" value="ECO:0007669"/>
    <property type="project" value="UniProtKB-UniRule"/>
</dbReference>
<dbReference type="GO" id="GO:0004831">
    <property type="term" value="F:tyrosine-tRNA ligase activity"/>
    <property type="evidence" value="ECO:0007669"/>
    <property type="project" value="UniProtKB-UniRule"/>
</dbReference>
<dbReference type="GO" id="GO:0006437">
    <property type="term" value="P:tyrosyl-tRNA aminoacylation"/>
    <property type="evidence" value="ECO:0007669"/>
    <property type="project" value="UniProtKB-UniRule"/>
</dbReference>
<dbReference type="CDD" id="cd00805">
    <property type="entry name" value="TyrRS_core"/>
    <property type="match status" value="1"/>
</dbReference>
<dbReference type="Gene3D" id="3.40.50.620">
    <property type="entry name" value="HUPs"/>
    <property type="match status" value="1"/>
</dbReference>
<dbReference type="Gene3D" id="1.10.240.10">
    <property type="entry name" value="Tyrosyl-Transfer RNA Synthetase"/>
    <property type="match status" value="1"/>
</dbReference>
<dbReference type="HAMAP" id="MF_02008">
    <property type="entry name" value="Tyr_tRNA_synth_type3"/>
    <property type="match status" value="1"/>
</dbReference>
<dbReference type="InterPro" id="IPR001412">
    <property type="entry name" value="aa-tRNA-synth_I_CS"/>
</dbReference>
<dbReference type="InterPro" id="IPR002305">
    <property type="entry name" value="aa-tRNA-synth_Ic"/>
</dbReference>
<dbReference type="InterPro" id="IPR014729">
    <property type="entry name" value="Rossmann-like_a/b/a_fold"/>
</dbReference>
<dbReference type="InterPro" id="IPR002307">
    <property type="entry name" value="Tyr-tRNA-ligase"/>
</dbReference>
<dbReference type="InterPro" id="IPR023684">
    <property type="entry name" value="Tyr-tRNA-ligase_3"/>
</dbReference>
<dbReference type="InterPro" id="IPR023617">
    <property type="entry name" value="Tyr-tRNA-ligase_arc/euk-type"/>
</dbReference>
<dbReference type="InterPro" id="IPR050489">
    <property type="entry name" value="Tyr-tRNA_synthase"/>
</dbReference>
<dbReference type="NCBIfam" id="NF006330">
    <property type="entry name" value="PRK08560.1"/>
    <property type="match status" value="1"/>
</dbReference>
<dbReference type="NCBIfam" id="TIGR00234">
    <property type="entry name" value="tyrS"/>
    <property type="match status" value="1"/>
</dbReference>
<dbReference type="PANTHER" id="PTHR46264:SF4">
    <property type="entry name" value="TYROSINE--TRNA LIGASE, CYTOPLASMIC"/>
    <property type="match status" value="1"/>
</dbReference>
<dbReference type="PANTHER" id="PTHR46264">
    <property type="entry name" value="TYROSINE-TRNA LIGASE"/>
    <property type="match status" value="1"/>
</dbReference>
<dbReference type="Pfam" id="PF00579">
    <property type="entry name" value="tRNA-synt_1b"/>
    <property type="match status" value="1"/>
</dbReference>
<dbReference type="PIRSF" id="PIRSF006588">
    <property type="entry name" value="TyrRS_arch_euk"/>
    <property type="match status" value="1"/>
</dbReference>
<dbReference type="PRINTS" id="PR01040">
    <property type="entry name" value="TRNASYNTHTYR"/>
</dbReference>
<dbReference type="SUPFAM" id="SSF52374">
    <property type="entry name" value="Nucleotidylyl transferase"/>
    <property type="match status" value="1"/>
</dbReference>
<dbReference type="PROSITE" id="PS00178">
    <property type="entry name" value="AA_TRNA_LIGASE_I"/>
    <property type="match status" value="1"/>
</dbReference>
<feature type="chain" id="PRO_0000240257" description="Tyrosine--tRNA ligase">
    <location>
        <begin position="1"/>
        <end position="317"/>
    </location>
</feature>
<feature type="short sequence motif" description="'HIGH' region">
    <location>
        <begin position="38"/>
        <end position="46"/>
    </location>
</feature>
<feature type="short sequence motif" description="'KMSKS' region">
    <location>
        <begin position="211"/>
        <end position="215"/>
    </location>
</feature>
<feature type="binding site" evidence="1">
    <location>
        <position position="33"/>
    </location>
    <ligand>
        <name>L-tyrosine</name>
        <dbReference type="ChEBI" id="CHEBI:58315"/>
    </ligand>
</feature>
<feature type="binding site" evidence="1">
    <location>
        <position position="155"/>
    </location>
    <ligand>
        <name>L-tyrosine</name>
        <dbReference type="ChEBI" id="CHEBI:58315"/>
    </ligand>
</feature>
<feature type="binding site" evidence="1">
    <location>
        <position position="159"/>
    </location>
    <ligand>
        <name>L-tyrosine</name>
        <dbReference type="ChEBI" id="CHEBI:58315"/>
    </ligand>
</feature>
<feature type="binding site" evidence="1">
    <location>
        <position position="162"/>
    </location>
    <ligand>
        <name>L-tyrosine</name>
        <dbReference type="ChEBI" id="CHEBI:58315"/>
    </ligand>
</feature>
<feature type="binding site" evidence="1">
    <location>
        <position position="177"/>
    </location>
    <ligand>
        <name>L-tyrosine</name>
        <dbReference type="ChEBI" id="CHEBI:58315"/>
    </ligand>
</feature>
<feature type="binding site" evidence="1">
    <location>
        <position position="214"/>
    </location>
    <ligand>
        <name>ATP</name>
        <dbReference type="ChEBI" id="CHEBI:30616"/>
    </ligand>
</feature>
<comment type="function">
    <text evidence="1">Catalyzes the attachment of tyrosine to tRNA(Tyr) in a two-step reaction: tyrosine is first activated by ATP to form Tyr-AMP and then transferred to the acceptor end of tRNA(Tyr).</text>
</comment>
<comment type="catalytic activity">
    <reaction evidence="1">
        <text>tRNA(Tyr) + L-tyrosine + ATP = L-tyrosyl-tRNA(Tyr) + AMP + diphosphate + H(+)</text>
        <dbReference type="Rhea" id="RHEA:10220"/>
        <dbReference type="Rhea" id="RHEA-COMP:9706"/>
        <dbReference type="Rhea" id="RHEA-COMP:9707"/>
        <dbReference type="ChEBI" id="CHEBI:15378"/>
        <dbReference type="ChEBI" id="CHEBI:30616"/>
        <dbReference type="ChEBI" id="CHEBI:33019"/>
        <dbReference type="ChEBI" id="CHEBI:58315"/>
        <dbReference type="ChEBI" id="CHEBI:78442"/>
        <dbReference type="ChEBI" id="CHEBI:78536"/>
        <dbReference type="ChEBI" id="CHEBI:456215"/>
        <dbReference type="EC" id="6.1.1.1"/>
    </reaction>
</comment>
<comment type="subunit">
    <text evidence="1">Homodimer.</text>
</comment>
<comment type="subcellular location">
    <subcellularLocation>
        <location evidence="1">Cytoplasm</location>
    </subcellularLocation>
</comment>
<comment type="similarity">
    <text evidence="1">Belongs to the class-I aminoacyl-tRNA synthetase family. TyrS type 3 subfamily.</text>
</comment>
<keyword id="KW-0030">Aminoacyl-tRNA synthetase</keyword>
<keyword id="KW-0067">ATP-binding</keyword>
<keyword id="KW-0963">Cytoplasm</keyword>
<keyword id="KW-0436">Ligase</keyword>
<keyword id="KW-0547">Nucleotide-binding</keyword>
<keyword id="KW-0648">Protein biosynthesis</keyword>
<organism>
    <name type="scientific">Methanosarcina barkeri (strain Fusaro / DSM 804)</name>
    <dbReference type="NCBI Taxonomy" id="269797"/>
    <lineage>
        <taxon>Archaea</taxon>
        <taxon>Methanobacteriati</taxon>
        <taxon>Methanobacteriota</taxon>
        <taxon>Stenosarchaea group</taxon>
        <taxon>Methanomicrobia</taxon>
        <taxon>Methanosarcinales</taxon>
        <taxon>Methanosarcinaceae</taxon>
        <taxon>Methanosarcina</taxon>
    </lineage>
</organism>
<name>SYY_METBF</name>